<accession>Q7MXD5</accession>
<protein>
    <recommendedName>
        <fullName evidence="1">Arginine--tRNA ligase</fullName>
        <ecNumber evidence="1">6.1.1.19</ecNumber>
    </recommendedName>
    <alternativeName>
        <fullName evidence="1">Arginyl-tRNA synthetase</fullName>
        <shortName evidence="1">ArgRS</shortName>
    </alternativeName>
</protein>
<name>SYR_PORGI</name>
<proteinExistence type="inferred from homology"/>
<comment type="catalytic activity">
    <reaction evidence="1">
        <text>tRNA(Arg) + L-arginine + ATP = L-arginyl-tRNA(Arg) + AMP + diphosphate</text>
        <dbReference type="Rhea" id="RHEA:20301"/>
        <dbReference type="Rhea" id="RHEA-COMP:9658"/>
        <dbReference type="Rhea" id="RHEA-COMP:9673"/>
        <dbReference type="ChEBI" id="CHEBI:30616"/>
        <dbReference type="ChEBI" id="CHEBI:32682"/>
        <dbReference type="ChEBI" id="CHEBI:33019"/>
        <dbReference type="ChEBI" id="CHEBI:78442"/>
        <dbReference type="ChEBI" id="CHEBI:78513"/>
        <dbReference type="ChEBI" id="CHEBI:456215"/>
        <dbReference type="EC" id="6.1.1.19"/>
    </reaction>
</comment>
<comment type="subunit">
    <text evidence="1">Monomer.</text>
</comment>
<comment type="subcellular location">
    <subcellularLocation>
        <location evidence="1">Cytoplasm</location>
    </subcellularLocation>
</comment>
<comment type="similarity">
    <text evidence="1">Belongs to the class-I aminoacyl-tRNA synthetase family.</text>
</comment>
<organism>
    <name type="scientific">Porphyromonas gingivalis (strain ATCC BAA-308 / W83)</name>
    <dbReference type="NCBI Taxonomy" id="242619"/>
    <lineage>
        <taxon>Bacteria</taxon>
        <taxon>Pseudomonadati</taxon>
        <taxon>Bacteroidota</taxon>
        <taxon>Bacteroidia</taxon>
        <taxon>Bacteroidales</taxon>
        <taxon>Porphyromonadaceae</taxon>
        <taxon>Porphyromonas</taxon>
    </lineage>
</organism>
<dbReference type="EC" id="6.1.1.19" evidence="1"/>
<dbReference type="EMBL" id="AE015924">
    <property type="protein sequence ID" value="AAQ65487.1"/>
    <property type="molecule type" value="Genomic_DNA"/>
</dbReference>
<dbReference type="RefSeq" id="WP_005874502.1">
    <property type="nucleotide sequence ID" value="NC_002950.2"/>
</dbReference>
<dbReference type="SMR" id="Q7MXD5"/>
<dbReference type="STRING" id="242619.PG_0267"/>
<dbReference type="EnsemblBacteria" id="AAQ65487">
    <property type="protein sequence ID" value="AAQ65487"/>
    <property type="gene ID" value="PG_0267"/>
</dbReference>
<dbReference type="KEGG" id="pgi:PG_0267"/>
<dbReference type="PATRIC" id="fig|242619.8.peg.245"/>
<dbReference type="eggNOG" id="COG0018">
    <property type="taxonomic scope" value="Bacteria"/>
</dbReference>
<dbReference type="HOGENOM" id="CLU_006406_6_1_10"/>
<dbReference type="BioCyc" id="PGIN242619:G1G02-250-MONOMER"/>
<dbReference type="Proteomes" id="UP000000588">
    <property type="component" value="Chromosome"/>
</dbReference>
<dbReference type="GO" id="GO:0005737">
    <property type="term" value="C:cytoplasm"/>
    <property type="evidence" value="ECO:0007669"/>
    <property type="project" value="UniProtKB-SubCell"/>
</dbReference>
<dbReference type="GO" id="GO:0004814">
    <property type="term" value="F:arginine-tRNA ligase activity"/>
    <property type="evidence" value="ECO:0007669"/>
    <property type="project" value="UniProtKB-UniRule"/>
</dbReference>
<dbReference type="GO" id="GO:0005524">
    <property type="term" value="F:ATP binding"/>
    <property type="evidence" value="ECO:0007669"/>
    <property type="project" value="UniProtKB-UniRule"/>
</dbReference>
<dbReference type="GO" id="GO:0006420">
    <property type="term" value="P:arginyl-tRNA aminoacylation"/>
    <property type="evidence" value="ECO:0007669"/>
    <property type="project" value="UniProtKB-UniRule"/>
</dbReference>
<dbReference type="FunFam" id="3.40.50.620:FF:000125">
    <property type="entry name" value="Arginine--tRNA ligase"/>
    <property type="match status" value="1"/>
</dbReference>
<dbReference type="Gene3D" id="3.30.1360.70">
    <property type="entry name" value="Arginyl tRNA synthetase N-terminal domain"/>
    <property type="match status" value="1"/>
</dbReference>
<dbReference type="Gene3D" id="3.40.50.620">
    <property type="entry name" value="HUPs"/>
    <property type="match status" value="1"/>
</dbReference>
<dbReference type="Gene3D" id="1.10.730.10">
    <property type="entry name" value="Isoleucyl-tRNA Synthetase, Domain 1"/>
    <property type="match status" value="1"/>
</dbReference>
<dbReference type="HAMAP" id="MF_00123">
    <property type="entry name" value="Arg_tRNA_synth"/>
    <property type="match status" value="1"/>
</dbReference>
<dbReference type="InterPro" id="IPR001412">
    <property type="entry name" value="aa-tRNA-synth_I_CS"/>
</dbReference>
<dbReference type="InterPro" id="IPR001278">
    <property type="entry name" value="Arg-tRNA-ligase"/>
</dbReference>
<dbReference type="InterPro" id="IPR005148">
    <property type="entry name" value="Arg-tRNA-synth_N"/>
</dbReference>
<dbReference type="InterPro" id="IPR036695">
    <property type="entry name" value="Arg-tRNA-synth_N_sf"/>
</dbReference>
<dbReference type="InterPro" id="IPR035684">
    <property type="entry name" value="ArgRS_core"/>
</dbReference>
<dbReference type="InterPro" id="IPR008909">
    <property type="entry name" value="DALR_anticod-bd"/>
</dbReference>
<dbReference type="InterPro" id="IPR014729">
    <property type="entry name" value="Rossmann-like_a/b/a_fold"/>
</dbReference>
<dbReference type="InterPro" id="IPR009080">
    <property type="entry name" value="tRNAsynth_Ia_anticodon-bd"/>
</dbReference>
<dbReference type="NCBIfam" id="TIGR00456">
    <property type="entry name" value="argS"/>
    <property type="match status" value="1"/>
</dbReference>
<dbReference type="PANTHER" id="PTHR11956:SF5">
    <property type="entry name" value="ARGININE--TRNA LIGASE, CYTOPLASMIC"/>
    <property type="match status" value="1"/>
</dbReference>
<dbReference type="PANTHER" id="PTHR11956">
    <property type="entry name" value="ARGINYL-TRNA SYNTHETASE"/>
    <property type="match status" value="1"/>
</dbReference>
<dbReference type="Pfam" id="PF03485">
    <property type="entry name" value="Arg_tRNA_synt_N"/>
    <property type="match status" value="1"/>
</dbReference>
<dbReference type="Pfam" id="PF05746">
    <property type="entry name" value="DALR_1"/>
    <property type="match status" value="1"/>
</dbReference>
<dbReference type="Pfam" id="PF00750">
    <property type="entry name" value="tRNA-synt_1d"/>
    <property type="match status" value="1"/>
</dbReference>
<dbReference type="PRINTS" id="PR01038">
    <property type="entry name" value="TRNASYNTHARG"/>
</dbReference>
<dbReference type="SMART" id="SM01016">
    <property type="entry name" value="Arg_tRNA_synt_N"/>
    <property type="match status" value="1"/>
</dbReference>
<dbReference type="SMART" id="SM00836">
    <property type="entry name" value="DALR_1"/>
    <property type="match status" value="1"/>
</dbReference>
<dbReference type="SUPFAM" id="SSF47323">
    <property type="entry name" value="Anticodon-binding domain of a subclass of class I aminoacyl-tRNA synthetases"/>
    <property type="match status" value="1"/>
</dbReference>
<dbReference type="SUPFAM" id="SSF55190">
    <property type="entry name" value="Arginyl-tRNA synthetase (ArgRS), N-terminal 'additional' domain"/>
    <property type="match status" value="1"/>
</dbReference>
<dbReference type="SUPFAM" id="SSF52374">
    <property type="entry name" value="Nucleotidylyl transferase"/>
    <property type="match status" value="1"/>
</dbReference>
<dbReference type="PROSITE" id="PS00178">
    <property type="entry name" value="AA_TRNA_LIGASE_I"/>
    <property type="match status" value="1"/>
</dbReference>
<feature type="chain" id="PRO_0000151588" description="Arginine--tRNA ligase">
    <location>
        <begin position="1"/>
        <end position="597"/>
    </location>
</feature>
<feature type="short sequence motif" description="'HIGH' region">
    <location>
        <begin position="125"/>
        <end position="135"/>
    </location>
</feature>
<keyword id="KW-0030">Aminoacyl-tRNA synthetase</keyword>
<keyword id="KW-0067">ATP-binding</keyword>
<keyword id="KW-0963">Cytoplasm</keyword>
<keyword id="KW-0436">Ligase</keyword>
<keyword id="KW-0547">Nucleotide-binding</keyword>
<keyword id="KW-0648">Protein biosynthesis</keyword>
<keyword id="KW-1185">Reference proteome</keyword>
<gene>
    <name evidence="1" type="primary">argS</name>
    <name type="ordered locus">PG_0267</name>
</gene>
<evidence type="ECO:0000255" key="1">
    <source>
        <dbReference type="HAMAP-Rule" id="MF_00123"/>
    </source>
</evidence>
<sequence length="597" mass="67492">MSILQKLENSAAAAVKALYGTDPMEGQIQLQKTKREFKGHLTLVVFPFVKMSRKSPEATATEIGEWLLANESAVSAIEVVKGFLNLTIAPRVWLELLNEIRADINFGHKVATEDSPLVMVEYSSPNTNKPLHLGHVRNNLLGYSLSEIMKANGYRVVKTNIVNDRGIHICKSMLAWQKWGDGVTPEKAGKKGDHLIGDFYVLFDKHYKAELNSLMAEGKSKEEAEAASTLMAEAREMLRLWEAGDEKVVDLWRTMNQWVYDGFDATYKMMGVDFDKIYYESETYLVGKEEVLRGLEEGLFVKHSDGSVWADLTKDGLDEKLLLRADGTSVYMTQDIGTAKMRFNDYPINRMIYVVGNEQNYHFQVLSILLDRLGFEFGKGLVHFSYGMVELPEGKMKSREGTVVDADDLMDEMIRTAAEIAAEAGKAAEMDEEESREVARIVGLGSLKYFILKVDPRKNMTFNPKESIDFNGNTGSFVQYTYARIRSLMRRAEAAGYDIPSQLPTDLPLSEKEEALIQKVSEYAEVVSEAGHSYSPALIANYIYDLVKEYNQFYHDFSVLKEEDERIRAFRLALSEVVALTMRKGFALLGIEMPERM</sequence>
<reference key="1">
    <citation type="journal article" date="2003" name="J. Bacteriol.">
        <title>Complete genome sequence of the oral pathogenic bacterium Porphyromonas gingivalis strain W83.</title>
        <authorList>
            <person name="Nelson K.E."/>
            <person name="Fleischmann R.D."/>
            <person name="DeBoy R.T."/>
            <person name="Paulsen I.T."/>
            <person name="Fouts D.E."/>
            <person name="Eisen J.A."/>
            <person name="Daugherty S.C."/>
            <person name="Dodson R.J."/>
            <person name="Durkin A.S."/>
            <person name="Gwinn M.L."/>
            <person name="Haft D.H."/>
            <person name="Kolonay J.F."/>
            <person name="Nelson W.C."/>
            <person name="Mason T.M."/>
            <person name="Tallon L."/>
            <person name="Gray J."/>
            <person name="Granger D."/>
            <person name="Tettelin H."/>
            <person name="Dong H."/>
            <person name="Galvin J.L."/>
            <person name="Duncan M.J."/>
            <person name="Dewhirst F.E."/>
            <person name="Fraser C.M."/>
        </authorList>
    </citation>
    <scope>NUCLEOTIDE SEQUENCE [LARGE SCALE GENOMIC DNA]</scope>
    <source>
        <strain>ATCC BAA-308 / W83</strain>
    </source>
</reference>